<comment type="function">
    <text evidence="1">Catalyzes the condensation of iminoaspartate with dihydroxyacetone phosphate to form quinolinate.</text>
</comment>
<comment type="catalytic activity">
    <reaction evidence="1">
        <text>iminosuccinate + dihydroxyacetone phosphate = quinolinate + phosphate + 2 H2O + H(+)</text>
        <dbReference type="Rhea" id="RHEA:25888"/>
        <dbReference type="ChEBI" id="CHEBI:15377"/>
        <dbReference type="ChEBI" id="CHEBI:15378"/>
        <dbReference type="ChEBI" id="CHEBI:29959"/>
        <dbReference type="ChEBI" id="CHEBI:43474"/>
        <dbReference type="ChEBI" id="CHEBI:57642"/>
        <dbReference type="ChEBI" id="CHEBI:77875"/>
        <dbReference type="EC" id="2.5.1.72"/>
    </reaction>
    <physiologicalReaction direction="left-to-right" evidence="1">
        <dbReference type="Rhea" id="RHEA:25889"/>
    </physiologicalReaction>
</comment>
<comment type="cofactor">
    <cofactor evidence="1">
        <name>[4Fe-4S] cluster</name>
        <dbReference type="ChEBI" id="CHEBI:49883"/>
    </cofactor>
    <text evidence="1">Binds 1 [4Fe-4S] cluster per subunit.</text>
</comment>
<comment type="pathway">
    <text evidence="1">Cofactor biosynthesis; NAD(+) biosynthesis; quinolinate from iminoaspartate: step 1/1.</text>
</comment>
<comment type="subcellular location">
    <subcellularLocation>
        <location evidence="1">Cytoplasm</location>
    </subcellularLocation>
</comment>
<comment type="similarity">
    <text evidence="1">Belongs to the quinolinate synthase family. Type 2 subfamily.</text>
</comment>
<dbReference type="EC" id="2.5.1.72" evidence="1"/>
<dbReference type="EMBL" id="AE017221">
    <property type="protein sequence ID" value="AAS80968.1"/>
    <property type="molecule type" value="Genomic_DNA"/>
</dbReference>
<dbReference type="RefSeq" id="WP_011173065.1">
    <property type="nucleotide sequence ID" value="NC_005835.1"/>
</dbReference>
<dbReference type="SMR" id="Q72JZ8"/>
<dbReference type="KEGG" id="tth:TT_C0620"/>
<dbReference type="eggNOG" id="COG0379">
    <property type="taxonomic scope" value="Bacteria"/>
</dbReference>
<dbReference type="HOGENOM" id="CLU_047382_0_0_0"/>
<dbReference type="OrthoDB" id="9801204at2"/>
<dbReference type="UniPathway" id="UPA00253">
    <property type="reaction ID" value="UER00327"/>
</dbReference>
<dbReference type="Proteomes" id="UP000000592">
    <property type="component" value="Chromosome"/>
</dbReference>
<dbReference type="GO" id="GO:0005737">
    <property type="term" value="C:cytoplasm"/>
    <property type="evidence" value="ECO:0007669"/>
    <property type="project" value="UniProtKB-SubCell"/>
</dbReference>
<dbReference type="GO" id="GO:0051539">
    <property type="term" value="F:4 iron, 4 sulfur cluster binding"/>
    <property type="evidence" value="ECO:0007669"/>
    <property type="project" value="UniProtKB-KW"/>
</dbReference>
<dbReference type="GO" id="GO:0046872">
    <property type="term" value="F:metal ion binding"/>
    <property type="evidence" value="ECO:0007669"/>
    <property type="project" value="UniProtKB-KW"/>
</dbReference>
<dbReference type="GO" id="GO:0008987">
    <property type="term" value="F:quinolinate synthetase A activity"/>
    <property type="evidence" value="ECO:0007669"/>
    <property type="project" value="UniProtKB-UniRule"/>
</dbReference>
<dbReference type="GO" id="GO:0034628">
    <property type="term" value="P:'de novo' NAD biosynthetic process from L-aspartate"/>
    <property type="evidence" value="ECO:0007669"/>
    <property type="project" value="TreeGrafter"/>
</dbReference>
<dbReference type="Gene3D" id="3.40.50.10800">
    <property type="entry name" value="NadA-like"/>
    <property type="match status" value="3"/>
</dbReference>
<dbReference type="HAMAP" id="MF_00568">
    <property type="entry name" value="NadA_type2"/>
    <property type="match status" value="1"/>
</dbReference>
<dbReference type="InterPro" id="IPR003473">
    <property type="entry name" value="NadA"/>
</dbReference>
<dbReference type="InterPro" id="IPR036094">
    <property type="entry name" value="NadA_sf"/>
</dbReference>
<dbReference type="InterPro" id="IPR023066">
    <property type="entry name" value="Quinolinate_synth_type2"/>
</dbReference>
<dbReference type="NCBIfam" id="TIGR00550">
    <property type="entry name" value="nadA"/>
    <property type="match status" value="1"/>
</dbReference>
<dbReference type="NCBIfam" id="NF006878">
    <property type="entry name" value="PRK09375.1-2"/>
    <property type="match status" value="1"/>
</dbReference>
<dbReference type="NCBIfam" id="NF006879">
    <property type="entry name" value="PRK09375.1-4"/>
    <property type="match status" value="1"/>
</dbReference>
<dbReference type="PANTHER" id="PTHR30573:SF0">
    <property type="entry name" value="QUINOLINATE SYNTHASE, CHLOROPLASTIC"/>
    <property type="match status" value="1"/>
</dbReference>
<dbReference type="PANTHER" id="PTHR30573">
    <property type="entry name" value="QUINOLINATE SYNTHETASE A"/>
    <property type="match status" value="1"/>
</dbReference>
<dbReference type="Pfam" id="PF02445">
    <property type="entry name" value="NadA"/>
    <property type="match status" value="1"/>
</dbReference>
<dbReference type="SUPFAM" id="SSF142754">
    <property type="entry name" value="NadA-like"/>
    <property type="match status" value="1"/>
</dbReference>
<accession>Q72JZ8</accession>
<gene>
    <name evidence="1" type="primary">nadA</name>
    <name type="ordered locus">TT_C0620</name>
</gene>
<sequence length="310" mass="34153">MGRMRGEALAQEVLRLKRERNAVILAHSYQLPEVQEVADFVGDSLGLAREAQRTRAEVIVFCGVHFMAETAAILNPEKTVLLPDLEAGCSLADSIRPEDVLAWKAKHPDGIVVAYVNTKAEVKALADVCVTSANAVEVVSRLPQDRPIYFVPDMFLGAHVARATGRRLDLFPGECHVHAGIREEHLKALLEAHPGAEFLIHPECGCGSGCLYLKPDAKMLSTEGMVRYAKGAEAREFVVATEVGILHRLKKEAPEKAFFPVKPDAVCEYMKRITLEKVYLSLKEMRHVVRVPEEVAGRARRALEAMVAVG</sequence>
<reference key="1">
    <citation type="journal article" date="2004" name="Nat. Biotechnol.">
        <title>The genome sequence of the extreme thermophile Thermus thermophilus.</title>
        <authorList>
            <person name="Henne A."/>
            <person name="Brueggemann H."/>
            <person name="Raasch C."/>
            <person name="Wiezer A."/>
            <person name="Hartsch T."/>
            <person name="Liesegang H."/>
            <person name="Johann A."/>
            <person name="Lienard T."/>
            <person name="Gohl O."/>
            <person name="Martinez-Arias R."/>
            <person name="Jacobi C."/>
            <person name="Starkuviene V."/>
            <person name="Schlenczeck S."/>
            <person name="Dencker S."/>
            <person name="Huber R."/>
            <person name="Klenk H.-P."/>
            <person name="Kramer W."/>
            <person name="Merkl R."/>
            <person name="Gottschalk G."/>
            <person name="Fritz H.-J."/>
        </authorList>
    </citation>
    <scope>NUCLEOTIDE SEQUENCE [LARGE SCALE GENOMIC DNA]</scope>
    <source>
        <strain>ATCC BAA-163 / DSM 7039 / HB27</strain>
    </source>
</reference>
<name>NADA_THET2</name>
<proteinExistence type="inferred from homology"/>
<organism>
    <name type="scientific">Thermus thermophilus (strain ATCC BAA-163 / DSM 7039 / HB27)</name>
    <dbReference type="NCBI Taxonomy" id="262724"/>
    <lineage>
        <taxon>Bacteria</taxon>
        <taxon>Thermotogati</taxon>
        <taxon>Deinococcota</taxon>
        <taxon>Deinococci</taxon>
        <taxon>Thermales</taxon>
        <taxon>Thermaceae</taxon>
        <taxon>Thermus</taxon>
    </lineage>
</organism>
<feature type="chain" id="PRO_1000072574" description="Quinolinate synthase">
    <location>
        <begin position="1"/>
        <end position="310"/>
    </location>
</feature>
<feature type="binding site" evidence="1">
    <location>
        <position position="27"/>
    </location>
    <ligand>
        <name>iminosuccinate</name>
        <dbReference type="ChEBI" id="CHEBI:77875"/>
    </ligand>
</feature>
<feature type="binding site" evidence="1">
    <location>
        <position position="44"/>
    </location>
    <ligand>
        <name>iminosuccinate</name>
        <dbReference type="ChEBI" id="CHEBI:77875"/>
    </ligand>
</feature>
<feature type="binding site" evidence="1">
    <location>
        <position position="89"/>
    </location>
    <ligand>
        <name>[4Fe-4S] cluster</name>
        <dbReference type="ChEBI" id="CHEBI:49883"/>
    </ligand>
</feature>
<feature type="binding site" evidence="1">
    <location>
        <begin position="115"/>
        <end position="117"/>
    </location>
    <ligand>
        <name>iminosuccinate</name>
        <dbReference type="ChEBI" id="CHEBI:77875"/>
    </ligand>
</feature>
<feature type="binding site" evidence="1">
    <location>
        <position position="132"/>
    </location>
    <ligand>
        <name>iminosuccinate</name>
        <dbReference type="ChEBI" id="CHEBI:77875"/>
    </ligand>
</feature>
<feature type="binding site" evidence="1">
    <location>
        <position position="175"/>
    </location>
    <ligand>
        <name>[4Fe-4S] cluster</name>
        <dbReference type="ChEBI" id="CHEBI:49883"/>
    </ligand>
</feature>
<feature type="binding site" evidence="1">
    <location>
        <begin position="201"/>
        <end position="203"/>
    </location>
    <ligand>
        <name>iminosuccinate</name>
        <dbReference type="ChEBI" id="CHEBI:77875"/>
    </ligand>
</feature>
<feature type="binding site" evidence="1">
    <location>
        <position position="222"/>
    </location>
    <ligand>
        <name>iminosuccinate</name>
        <dbReference type="ChEBI" id="CHEBI:77875"/>
    </ligand>
</feature>
<feature type="binding site" evidence="1">
    <location>
        <position position="267"/>
    </location>
    <ligand>
        <name>[4Fe-4S] cluster</name>
        <dbReference type="ChEBI" id="CHEBI:49883"/>
    </ligand>
</feature>
<evidence type="ECO:0000255" key="1">
    <source>
        <dbReference type="HAMAP-Rule" id="MF_00568"/>
    </source>
</evidence>
<keyword id="KW-0004">4Fe-4S</keyword>
<keyword id="KW-0963">Cytoplasm</keyword>
<keyword id="KW-0408">Iron</keyword>
<keyword id="KW-0411">Iron-sulfur</keyword>
<keyword id="KW-0479">Metal-binding</keyword>
<keyword id="KW-0662">Pyridine nucleotide biosynthesis</keyword>
<keyword id="KW-0808">Transferase</keyword>
<protein>
    <recommendedName>
        <fullName evidence="1">Quinolinate synthase</fullName>
        <ecNumber evidence="1">2.5.1.72</ecNumber>
    </recommendedName>
</protein>